<gene>
    <name evidence="1" type="primary">ruvB</name>
    <name type="ordered locus">Rleg2_3221</name>
</gene>
<keyword id="KW-0067">ATP-binding</keyword>
<keyword id="KW-0963">Cytoplasm</keyword>
<keyword id="KW-0227">DNA damage</keyword>
<keyword id="KW-0233">DNA recombination</keyword>
<keyword id="KW-0234">DNA repair</keyword>
<keyword id="KW-0238">DNA-binding</keyword>
<keyword id="KW-0378">Hydrolase</keyword>
<keyword id="KW-0547">Nucleotide-binding</keyword>
<keyword id="KW-1185">Reference proteome</keyword>
<name>RUVB_RHILW</name>
<accession>B5ZP80</accession>
<proteinExistence type="inferred from homology"/>
<reference key="1">
    <citation type="journal article" date="2010" name="Stand. Genomic Sci.">
        <title>Complete genome sequence of Rhizobium leguminosarum bv trifolii strain WSM2304, an effective microsymbiont of the South American clover Trifolium polymorphum.</title>
        <authorList>
            <person name="Reeve W."/>
            <person name="O'Hara G."/>
            <person name="Chain P."/>
            <person name="Ardley J."/>
            <person name="Brau L."/>
            <person name="Nandesena K."/>
            <person name="Tiwari R."/>
            <person name="Malfatti S."/>
            <person name="Kiss H."/>
            <person name="Lapidus A."/>
            <person name="Copeland A."/>
            <person name="Nolan M."/>
            <person name="Land M."/>
            <person name="Ivanova N."/>
            <person name="Mavromatis K."/>
            <person name="Markowitz V."/>
            <person name="Kyrpides N."/>
            <person name="Melino V."/>
            <person name="Denton M."/>
            <person name="Yates R."/>
            <person name="Howieson J."/>
        </authorList>
    </citation>
    <scope>NUCLEOTIDE SEQUENCE [LARGE SCALE GENOMIC DNA]</scope>
    <source>
        <strain>WSM2304</strain>
    </source>
</reference>
<sequence length="346" mass="38413">MSEPARLISPEKRGEDLDITLRPQSLDEFTGQAEARANLKVFIEAAKNRGEALDHVLFVGPPGLGKTTLAQIMAKELGVNFRSTSGPVIAKAGDLAALLTNLEERDVLFIDEIHRLNPAVEEILYPAMEDFQLDLIIGEGPAARSVKIDLSKFTLVAATTRLGLLTTPLRDRFGIPVRLSFYTVEELELIVRRGARLMNLPITEEGAREIARRARGTPRIAGRLLRRVRDFAEVARAEAVTREIADEALTRLLVDNVGFDQLDKRYLNMIAVNFGGGPVGIETIAAGLSEPRDAIEDIIEPYMIQQGFIQRTPRGRVLTAIAWKHLGMQPPKEMEAAQFRLFQEDN</sequence>
<dbReference type="EC" id="3.6.4.-" evidence="1"/>
<dbReference type="EMBL" id="CP001191">
    <property type="protein sequence ID" value="ACI56488.1"/>
    <property type="molecule type" value="Genomic_DNA"/>
</dbReference>
<dbReference type="RefSeq" id="WP_003590318.1">
    <property type="nucleotide sequence ID" value="NC_011369.1"/>
</dbReference>
<dbReference type="SMR" id="B5ZP80"/>
<dbReference type="STRING" id="395492.Rleg2_3221"/>
<dbReference type="KEGG" id="rlt:Rleg2_3221"/>
<dbReference type="eggNOG" id="COG2255">
    <property type="taxonomic scope" value="Bacteria"/>
</dbReference>
<dbReference type="HOGENOM" id="CLU_055599_1_0_5"/>
<dbReference type="Proteomes" id="UP000008330">
    <property type="component" value="Chromosome"/>
</dbReference>
<dbReference type="GO" id="GO:0005737">
    <property type="term" value="C:cytoplasm"/>
    <property type="evidence" value="ECO:0007669"/>
    <property type="project" value="UniProtKB-SubCell"/>
</dbReference>
<dbReference type="GO" id="GO:0048476">
    <property type="term" value="C:Holliday junction resolvase complex"/>
    <property type="evidence" value="ECO:0007669"/>
    <property type="project" value="UniProtKB-UniRule"/>
</dbReference>
<dbReference type="GO" id="GO:0005524">
    <property type="term" value="F:ATP binding"/>
    <property type="evidence" value="ECO:0007669"/>
    <property type="project" value="UniProtKB-UniRule"/>
</dbReference>
<dbReference type="GO" id="GO:0016887">
    <property type="term" value="F:ATP hydrolysis activity"/>
    <property type="evidence" value="ECO:0007669"/>
    <property type="project" value="InterPro"/>
</dbReference>
<dbReference type="GO" id="GO:0000400">
    <property type="term" value="F:four-way junction DNA binding"/>
    <property type="evidence" value="ECO:0007669"/>
    <property type="project" value="UniProtKB-UniRule"/>
</dbReference>
<dbReference type="GO" id="GO:0009378">
    <property type="term" value="F:four-way junction helicase activity"/>
    <property type="evidence" value="ECO:0007669"/>
    <property type="project" value="InterPro"/>
</dbReference>
<dbReference type="GO" id="GO:0006310">
    <property type="term" value="P:DNA recombination"/>
    <property type="evidence" value="ECO:0007669"/>
    <property type="project" value="UniProtKB-UniRule"/>
</dbReference>
<dbReference type="GO" id="GO:0006281">
    <property type="term" value="P:DNA repair"/>
    <property type="evidence" value="ECO:0007669"/>
    <property type="project" value="UniProtKB-UniRule"/>
</dbReference>
<dbReference type="CDD" id="cd00009">
    <property type="entry name" value="AAA"/>
    <property type="match status" value="1"/>
</dbReference>
<dbReference type="Gene3D" id="1.10.8.60">
    <property type="match status" value="1"/>
</dbReference>
<dbReference type="Gene3D" id="3.40.50.300">
    <property type="entry name" value="P-loop containing nucleotide triphosphate hydrolases"/>
    <property type="match status" value="1"/>
</dbReference>
<dbReference type="Gene3D" id="1.10.10.10">
    <property type="entry name" value="Winged helix-like DNA-binding domain superfamily/Winged helix DNA-binding domain"/>
    <property type="match status" value="1"/>
</dbReference>
<dbReference type="HAMAP" id="MF_00016">
    <property type="entry name" value="DNA_HJ_migration_RuvB"/>
    <property type="match status" value="1"/>
</dbReference>
<dbReference type="InterPro" id="IPR003593">
    <property type="entry name" value="AAA+_ATPase"/>
</dbReference>
<dbReference type="InterPro" id="IPR041445">
    <property type="entry name" value="AAA_lid_4"/>
</dbReference>
<dbReference type="InterPro" id="IPR000641">
    <property type="entry name" value="CbxX/CfxQ"/>
</dbReference>
<dbReference type="InterPro" id="IPR004605">
    <property type="entry name" value="DNA_helicase_Holl-junc_RuvB"/>
</dbReference>
<dbReference type="InterPro" id="IPR027417">
    <property type="entry name" value="P-loop_NTPase"/>
</dbReference>
<dbReference type="InterPro" id="IPR008824">
    <property type="entry name" value="RuvB-like_N"/>
</dbReference>
<dbReference type="InterPro" id="IPR008823">
    <property type="entry name" value="RuvB_C"/>
</dbReference>
<dbReference type="InterPro" id="IPR036388">
    <property type="entry name" value="WH-like_DNA-bd_sf"/>
</dbReference>
<dbReference type="InterPro" id="IPR036390">
    <property type="entry name" value="WH_DNA-bd_sf"/>
</dbReference>
<dbReference type="NCBIfam" id="NF000868">
    <property type="entry name" value="PRK00080.1"/>
    <property type="match status" value="1"/>
</dbReference>
<dbReference type="NCBIfam" id="TIGR00635">
    <property type="entry name" value="ruvB"/>
    <property type="match status" value="1"/>
</dbReference>
<dbReference type="PANTHER" id="PTHR42848">
    <property type="match status" value="1"/>
</dbReference>
<dbReference type="PANTHER" id="PTHR42848:SF1">
    <property type="entry name" value="HOLLIDAY JUNCTION BRANCH MIGRATION COMPLEX SUBUNIT RUVB"/>
    <property type="match status" value="1"/>
</dbReference>
<dbReference type="Pfam" id="PF17864">
    <property type="entry name" value="AAA_lid_4"/>
    <property type="match status" value="1"/>
</dbReference>
<dbReference type="Pfam" id="PF05491">
    <property type="entry name" value="RuvB_C"/>
    <property type="match status" value="1"/>
</dbReference>
<dbReference type="Pfam" id="PF05496">
    <property type="entry name" value="RuvB_N"/>
    <property type="match status" value="1"/>
</dbReference>
<dbReference type="PRINTS" id="PR00819">
    <property type="entry name" value="CBXCFQXSUPER"/>
</dbReference>
<dbReference type="SMART" id="SM00382">
    <property type="entry name" value="AAA"/>
    <property type="match status" value="1"/>
</dbReference>
<dbReference type="SUPFAM" id="SSF52540">
    <property type="entry name" value="P-loop containing nucleoside triphosphate hydrolases"/>
    <property type="match status" value="1"/>
</dbReference>
<dbReference type="SUPFAM" id="SSF46785">
    <property type="entry name" value="Winged helix' DNA-binding domain"/>
    <property type="match status" value="1"/>
</dbReference>
<organism>
    <name type="scientific">Rhizobium leguminosarum bv. trifolii (strain WSM2304)</name>
    <dbReference type="NCBI Taxonomy" id="395492"/>
    <lineage>
        <taxon>Bacteria</taxon>
        <taxon>Pseudomonadati</taxon>
        <taxon>Pseudomonadota</taxon>
        <taxon>Alphaproteobacteria</taxon>
        <taxon>Hyphomicrobiales</taxon>
        <taxon>Rhizobiaceae</taxon>
        <taxon>Rhizobium/Agrobacterium group</taxon>
        <taxon>Rhizobium</taxon>
    </lineage>
</organism>
<comment type="function">
    <text evidence="1">The RuvA-RuvB-RuvC complex processes Holliday junction (HJ) DNA during genetic recombination and DNA repair, while the RuvA-RuvB complex plays an important role in the rescue of blocked DNA replication forks via replication fork reversal (RFR). RuvA specifically binds to HJ cruciform DNA, conferring on it an open structure. The RuvB hexamer acts as an ATP-dependent pump, pulling dsDNA into and through the RuvAB complex. RuvB forms 2 homohexamers on either side of HJ DNA bound by 1 or 2 RuvA tetramers; 4 subunits per hexamer contact DNA at a time. Coordinated motions by a converter formed by DNA-disengaged RuvB subunits stimulates ATP hydrolysis and nucleotide exchange. Immobilization of the converter enables RuvB to convert the ATP-contained energy into a lever motion, pulling 2 nucleotides of DNA out of the RuvA tetramer per ATP hydrolyzed, thus driving DNA branch migration. The RuvB motors rotate together with the DNA substrate, which together with the progressing nucleotide cycle form the mechanistic basis for DNA recombination by continuous HJ branch migration. Branch migration allows RuvC to scan DNA until it finds its consensus sequence, where it cleaves and resolves cruciform DNA.</text>
</comment>
<comment type="catalytic activity">
    <reaction evidence="1">
        <text>ATP + H2O = ADP + phosphate + H(+)</text>
        <dbReference type="Rhea" id="RHEA:13065"/>
        <dbReference type="ChEBI" id="CHEBI:15377"/>
        <dbReference type="ChEBI" id="CHEBI:15378"/>
        <dbReference type="ChEBI" id="CHEBI:30616"/>
        <dbReference type="ChEBI" id="CHEBI:43474"/>
        <dbReference type="ChEBI" id="CHEBI:456216"/>
    </reaction>
</comment>
<comment type="subunit">
    <text evidence="1">Homohexamer. Forms an RuvA(8)-RuvB(12)-Holliday junction (HJ) complex. HJ DNA is sandwiched between 2 RuvA tetramers; dsDNA enters through RuvA and exits via RuvB. An RuvB hexamer assembles on each DNA strand where it exits the tetramer. Each RuvB hexamer is contacted by two RuvA subunits (via domain III) on 2 adjacent RuvB subunits; this complex drives branch migration. In the full resolvosome a probable DNA-RuvA(4)-RuvB(12)-RuvC(2) complex forms which resolves the HJ.</text>
</comment>
<comment type="subcellular location">
    <subcellularLocation>
        <location evidence="1">Cytoplasm</location>
    </subcellularLocation>
</comment>
<comment type="domain">
    <text evidence="1">Has 3 domains, the large (RuvB-L) and small ATPase (RuvB-S) domains and the C-terminal head (RuvB-H) domain. The head domain binds DNA, while the ATPase domains jointly bind ATP, ADP or are empty depending on the state of the subunit in the translocation cycle. During a single DNA translocation step the structure of each domain remains the same, but their relative positions change.</text>
</comment>
<comment type="similarity">
    <text evidence="1">Belongs to the RuvB family.</text>
</comment>
<evidence type="ECO:0000255" key="1">
    <source>
        <dbReference type="HAMAP-Rule" id="MF_00016"/>
    </source>
</evidence>
<protein>
    <recommendedName>
        <fullName evidence="1">Holliday junction branch migration complex subunit RuvB</fullName>
        <ecNumber evidence="1">3.6.4.-</ecNumber>
    </recommendedName>
</protein>
<feature type="chain" id="PRO_1000089668" description="Holliday junction branch migration complex subunit RuvB">
    <location>
        <begin position="1"/>
        <end position="346"/>
    </location>
</feature>
<feature type="region of interest" description="Large ATPase domain (RuvB-L)" evidence="1">
    <location>
        <begin position="1"/>
        <end position="182"/>
    </location>
</feature>
<feature type="region of interest" description="Small ATPAse domain (RuvB-S)" evidence="1">
    <location>
        <begin position="183"/>
        <end position="253"/>
    </location>
</feature>
<feature type="region of interest" description="Head domain (RuvB-H)" evidence="1">
    <location>
        <begin position="256"/>
        <end position="346"/>
    </location>
</feature>
<feature type="binding site" evidence="1">
    <location>
        <position position="21"/>
    </location>
    <ligand>
        <name>ATP</name>
        <dbReference type="ChEBI" id="CHEBI:30616"/>
    </ligand>
</feature>
<feature type="binding site" evidence="1">
    <location>
        <position position="22"/>
    </location>
    <ligand>
        <name>ATP</name>
        <dbReference type="ChEBI" id="CHEBI:30616"/>
    </ligand>
</feature>
<feature type="binding site" evidence="1">
    <location>
        <position position="63"/>
    </location>
    <ligand>
        <name>ATP</name>
        <dbReference type="ChEBI" id="CHEBI:30616"/>
    </ligand>
</feature>
<feature type="binding site" evidence="1">
    <location>
        <position position="66"/>
    </location>
    <ligand>
        <name>ATP</name>
        <dbReference type="ChEBI" id="CHEBI:30616"/>
    </ligand>
</feature>
<feature type="binding site" evidence="1">
    <location>
        <position position="67"/>
    </location>
    <ligand>
        <name>ATP</name>
        <dbReference type="ChEBI" id="CHEBI:30616"/>
    </ligand>
</feature>
<feature type="binding site" evidence="1">
    <location>
        <position position="67"/>
    </location>
    <ligand>
        <name>Mg(2+)</name>
        <dbReference type="ChEBI" id="CHEBI:18420"/>
    </ligand>
</feature>
<feature type="binding site" evidence="1">
    <location>
        <position position="68"/>
    </location>
    <ligand>
        <name>ATP</name>
        <dbReference type="ChEBI" id="CHEBI:30616"/>
    </ligand>
</feature>
<feature type="binding site" evidence="1">
    <location>
        <begin position="129"/>
        <end position="131"/>
    </location>
    <ligand>
        <name>ATP</name>
        <dbReference type="ChEBI" id="CHEBI:30616"/>
    </ligand>
</feature>
<feature type="binding site" evidence="1">
    <location>
        <position position="172"/>
    </location>
    <ligand>
        <name>ATP</name>
        <dbReference type="ChEBI" id="CHEBI:30616"/>
    </ligand>
</feature>
<feature type="binding site" evidence="1">
    <location>
        <position position="182"/>
    </location>
    <ligand>
        <name>ATP</name>
        <dbReference type="ChEBI" id="CHEBI:30616"/>
    </ligand>
</feature>
<feature type="binding site" evidence="1">
    <location>
        <position position="219"/>
    </location>
    <ligand>
        <name>ATP</name>
        <dbReference type="ChEBI" id="CHEBI:30616"/>
    </ligand>
</feature>
<feature type="binding site" evidence="1">
    <location>
        <position position="292"/>
    </location>
    <ligand>
        <name>DNA</name>
        <dbReference type="ChEBI" id="CHEBI:16991"/>
    </ligand>
</feature>
<feature type="binding site" evidence="1">
    <location>
        <position position="311"/>
    </location>
    <ligand>
        <name>DNA</name>
        <dbReference type="ChEBI" id="CHEBI:16991"/>
    </ligand>
</feature>
<feature type="binding site" evidence="1">
    <location>
        <position position="316"/>
    </location>
    <ligand>
        <name>DNA</name>
        <dbReference type="ChEBI" id="CHEBI:16991"/>
    </ligand>
</feature>